<organism>
    <name type="scientific">Paracidovorax citrulli (strain AAC00-1)</name>
    <name type="common">Acidovorax citrulli</name>
    <dbReference type="NCBI Taxonomy" id="397945"/>
    <lineage>
        <taxon>Bacteria</taxon>
        <taxon>Pseudomonadati</taxon>
        <taxon>Pseudomonadota</taxon>
        <taxon>Betaproteobacteria</taxon>
        <taxon>Burkholderiales</taxon>
        <taxon>Comamonadaceae</taxon>
        <taxon>Paracidovorax</taxon>
    </lineage>
</organism>
<evidence type="ECO:0000255" key="1">
    <source>
        <dbReference type="HAMAP-Rule" id="MF_01321"/>
    </source>
</evidence>
<feature type="chain" id="PRO_0000300269" description="DNA-directed RNA polymerase subunit beta">
    <location>
        <begin position="1"/>
        <end position="1374"/>
    </location>
</feature>
<protein>
    <recommendedName>
        <fullName evidence="1">DNA-directed RNA polymerase subunit beta</fullName>
        <shortName evidence="1">RNAP subunit beta</shortName>
        <ecNumber evidence="1">2.7.7.6</ecNumber>
    </recommendedName>
    <alternativeName>
        <fullName evidence="1">RNA polymerase subunit beta</fullName>
    </alternativeName>
    <alternativeName>
        <fullName evidence="1">Transcriptase subunit beta</fullName>
    </alternativeName>
</protein>
<comment type="function">
    <text evidence="1">DNA-dependent RNA polymerase catalyzes the transcription of DNA into RNA using the four ribonucleoside triphosphates as substrates.</text>
</comment>
<comment type="catalytic activity">
    <reaction evidence="1">
        <text>RNA(n) + a ribonucleoside 5'-triphosphate = RNA(n+1) + diphosphate</text>
        <dbReference type="Rhea" id="RHEA:21248"/>
        <dbReference type="Rhea" id="RHEA-COMP:14527"/>
        <dbReference type="Rhea" id="RHEA-COMP:17342"/>
        <dbReference type="ChEBI" id="CHEBI:33019"/>
        <dbReference type="ChEBI" id="CHEBI:61557"/>
        <dbReference type="ChEBI" id="CHEBI:140395"/>
        <dbReference type="EC" id="2.7.7.6"/>
    </reaction>
</comment>
<comment type="subunit">
    <text evidence="1">The RNAP catalytic core consists of 2 alpha, 1 beta, 1 beta' and 1 omega subunit. When a sigma factor is associated with the core the holoenzyme is formed, which can initiate transcription.</text>
</comment>
<comment type="similarity">
    <text evidence="1">Belongs to the RNA polymerase beta chain family.</text>
</comment>
<sequence length="1374" mass="153099">MAPTSTYSYTERKRIRKSFGSRDSVLKVPYLLQMQKDAYTAFLQADMAPQKRTNEGLQAAFNAAFPIVSHNGFVEMKFVEYNLAKPAFDVRECQTRGLTFASAVRAKVQLIIYDRESSTSQSKVVKEVKEQEVYMGEVPLMTDKGSFIINGTERVIVSQLHRSPGVFFEHDKGKTHSSGKLLFSARIIPYRGSWLDFEFDPKDILYFRVDRRRKMPVTILLKAIGLNPESILANFFVNDNFRLMDSGAQMEFVADRLKGEVARFDITDKSGKVVVAKDKRITARHTRELEQSGTTHISVPEDFLIGRVVARNIVDGDTGEIVAKANEELTEALLKKLRSAGVQDLQVIYTNELDQGAYISQTLRIDETVDEFAARVAIYRMMRPGEPPTEDAVQALFQRLFYNPDTYDLSRVGRMKFNAKIGRDESTGPMVLSNDDILAVVKILVDLRNGKGEVDDIDHLGNRRVRCVGELAENQYRTGLARIEKAVKERLGQAEQEPLMPHDLINSKPISAALKEFFGASQLSQFMDQTNPLAEITHKRRVSALGPGGLTRERAGFEVRDVHVTHYGRVCPIETPEGPNIGLINSLALYARLNEYGFIETPYRRVVDGKVTDQIDYLSAIEEGKYVIAQANAALDAEGRLTGDLVSAREKGESTLLSAERVQYMDVSPAQIVSVAASLVPFLEHDDANRALMGANMSRQAVPVLRPEKPMVGTGIERVAAVDSGTVVTANRGGIVDYVDATRIVVRVNDDEAVAGEVGVDIYNLIKYQRSNQNTNIHQRPIVKKGDVLAKGDVIADGASTDLGEIAIGQNMLIAFMPWNGYNFEDSILISERVVAEDRYTSIHIEELVVMARDTKLGAEEITRDIPNLSEQQLNRLDESGIIYVGAEVQPGDTLVGKVTPKGETTLTPEEKLLRAIFGEKASDVKDTSLRVDQGSSGTVIDVQVFTREGIQRDKRAQQIIDDELKRFRLDLNDQLRIVEADAFDRIEKLLNGRVANGGPQKLAKGTKIDKAYLASVEKFHWFDIRPAEDEVATQLESIKNALEQTRHSFDLAFEEKRKKLTQGDELPAGVLKMVKVYLAVKRRLQPGDKMAGRHGNKGVVSKIVPVEDMPYMADGTPADIVLNPLGVPSRMNIGQVLEVHLGWAGKGIGQRIGDMLRDQAKAAEMRKFLEEVYNSRGRKEDLSVLSDDEVMAMAANLTNGVPYATPVFDGASEAEIKDMLKLAYPDDIKERKGLTESRTQAYLYDGRTGERFERPTTIGYMHYLKLHHLVDDKMHARSTGPYSLVTQQPLGGKAQFGGQRFGEMEVWALEAYGASYVLQEMLTVKSDDVQGRTKVYESIVKGEHAIEAGMPESFNVLVKEIRSLGLDIELERS</sequence>
<reference key="1">
    <citation type="submission" date="2006-12" db="EMBL/GenBank/DDBJ databases">
        <title>Complete sequence of Acidovorax avenae subsp. citrulli AAC00-1.</title>
        <authorList>
            <person name="Copeland A."/>
            <person name="Lucas S."/>
            <person name="Lapidus A."/>
            <person name="Barry K."/>
            <person name="Detter J.C."/>
            <person name="Glavina del Rio T."/>
            <person name="Dalin E."/>
            <person name="Tice H."/>
            <person name="Pitluck S."/>
            <person name="Kiss H."/>
            <person name="Brettin T."/>
            <person name="Bruce D."/>
            <person name="Han C."/>
            <person name="Tapia R."/>
            <person name="Gilna P."/>
            <person name="Schmutz J."/>
            <person name="Larimer F."/>
            <person name="Land M."/>
            <person name="Hauser L."/>
            <person name="Kyrpides N."/>
            <person name="Kim E."/>
            <person name="Stahl D."/>
            <person name="Richardson P."/>
        </authorList>
    </citation>
    <scope>NUCLEOTIDE SEQUENCE [LARGE SCALE GENOMIC DNA]</scope>
    <source>
        <strain>AAC00-1</strain>
    </source>
</reference>
<gene>
    <name evidence="1" type="primary">rpoB</name>
    <name type="ordered locus">Aave_4531</name>
</gene>
<keyword id="KW-0240">DNA-directed RNA polymerase</keyword>
<keyword id="KW-0548">Nucleotidyltransferase</keyword>
<keyword id="KW-0804">Transcription</keyword>
<keyword id="KW-0808">Transferase</keyword>
<accession>A1TVT0</accession>
<name>RPOB_PARC0</name>
<proteinExistence type="inferred from homology"/>
<dbReference type="EC" id="2.7.7.6" evidence="1"/>
<dbReference type="EMBL" id="CP000512">
    <property type="protein sequence ID" value="ABM35068.1"/>
    <property type="molecule type" value="Genomic_DNA"/>
</dbReference>
<dbReference type="RefSeq" id="WP_011797537.1">
    <property type="nucleotide sequence ID" value="NC_008752.1"/>
</dbReference>
<dbReference type="SMR" id="A1TVT0"/>
<dbReference type="STRING" id="397945.Aave_4531"/>
<dbReference type="KEGG" id="aav:Aave_4531"/>
<dbReference type="eggNOG" id="COG0085">
    <property type="taxonomic scope" value="Bacteria"/>
</dbReference>
<dbReference type="HOGENOM" id="CLU_000524_4_3_4"/>
<dbReference type="OrthoDB" id="9803954at2"/>
<dbReference type="Proteomes" id="UP000002596">
    <property type="component" value="Chromosome"/>
</dbReference>
<dbReference type="GO" id="GO:0000428">
    <property type="term" value="C:DNA-directed RNA polymerase complex"/>
    <property type="evidence" value="ECO:0007669"/>
    <property type="project" value="UniProtKB-KW"/>
</dbReference>
<dbReference type="GO" id="GO:0003677">
    <property type="term" value="F:DNA binding"/>
    <property type="evidence" value="ECO:0007669"/>
    <property type="project" value="UniProtKB-UniRule"/>
</dbReference>
<dbReference type="GO" id="GO:0003899">
    <property type="term" value="F:DNA-directed RNA polymerase activity"/>
    <property type="evidence" value="ECO:0007669"/>
    <property type="project" value="UniProtKB-UniRule"/>
</dbReference>
<dbReference type="GO" id="GO:0032549">
    <property type="term" value="F:ribonucleoside binding"/>
    <property type="evidence" value="ECO:0007669"/>
    <property type="project" value="InterPro"/>
</dbReference>
<dbReference type="GO" id="GO:0006351">
    <property type="term" value="P:DNA-templated transcription"/>
    <property type="evidence" value="ECO:0007669"/>
    <property type="project" value="UniProtKB-UniRule"/>
</dbReference>
<dbReference type="CDD" id="cd00653">
    <property type="entry name" value="RNA_pol_B_RPB2"/>
    <property type="match status" value="1"/>
</dbReference>
<dbReference type="FunFam" id="2.40.50.100:FF:000006">
    <property type="entry name" value="DNA-directed RNA polymerase subunit beta"/>
    <property type="match status" value="1"/>
</dbReference>
<dbReference type="FunFam" id="3.90.1800.10:FF:000001">
    <property type="entry name" value="DNA-directed RNA polymerase subunit beta"/>
    <property type="match status" value="1"/>
</dbReference>
<dbReference type="Gene3D" id="2.40.50.100">
    <property type="match status" value="1"/>
</dbReference>
<dbReference type="Gene3D" id="2.40.50.150">
    <property type="match status" value="1"/>
</dbReference>
<dbReference type="Gene3D" id="3.90.1100.10">
    <property type="match status" value="2"/>
</dbReference>
<dbReference type="Gene3D" id="2.30.150.10">
    <property type="entry name" value="DNA-directed RNA polymerase, beta subunit, external 1 domain"/>
    <property type="match status" value="1"/>
</dbReference>
<dbReference type="Gene3D" id="2.40.270.10">
    <property type="entry name" value="DNA-directed RNA polymerase, subunit 2, domain 6"/>
    <property type="match status" value="2"/>
</dbReference>
<dbReference type="Gene3D" id="3.90.1800.10">
    <property type="entry name" value="RNA polymerase alpha subunit dimerisation domain"/>
    <property type="match status" value="1"/>
</dbReference>
<dbReference type="Gene3D" id="3.90.1110.10">
    <property type="entry name" value="RNA polymerase Rpb2, domain 2"/>
    <property type="match status" value="2"/>
</dbReference>
<dbReference type="HAMAP" id="MF_01321">
    <property type="entry name" value="RNApol_bact_RpoB"/>
    <property type="match status" value="1"/>
</dbReference>
<dbReference type="InterPro" id="IPR042107">
    <property type="entry name" value="DNA-dir_RNA_pol_bsu_ext_1_sf"/>
</dbReference>
<dbReference type="InterPro" id="IPR019462">
    <property type="entry name" value="DNA-dir_RNA_pol_bsu_external_1"/>
</dbReference>
<dbReference type="InterPro" id="IPR015712">
    <property type="entry name" value="DNA-dir_RNA_pol_su2"/>
</dbReference>
<dbReference type="InterPro" id="IPR007120">
    <property type="entry name" value="DNA-dir_RNAP_su2_dom"/>
</dbReference>
<dbReference type="InterPro" id="IPR037033">
    <property type="entry name" value="DNA-dir_RNAP_su2_hyb_sf"/>
</dbReference>
<dbReference type="InterPro" id="IPR010243">
    <property type="entry name" value="RNA_pol_bsu_bac"/>
</dbReference>
<dbReference type="InterPro" id="IPR007121">
    <property type="entry name" value="RNA_pol_bsu_CS"/>
</dbReference>
<dbReference type="InterPro" id="IPR007644">
    <property type="entry name" value="RNA_pol_bsu_protrusion"/>
</dbReference>
<dbReference type="InterPro" id="IPR007642">
    <property type="entry name" value="RNA_pol_Rpb2_2"/>
</dbReference>
<dbReference type="InterPro" id="IPR037034">
    <property type="entry name" value="RNA_pol_Rpb2_2_sf"/>
</dbReference>
<dbReference type="InterPro" id="IPR007645">
    <property type="entry name" value="RNA_pol_Rpb2_3"/>
</dbReference>
<dbReference type="InterPro" id="IPR007641">
    <property type="entry name" value="RNA_pol_Rpb2_7"/>
</dbReference>
<dbReference type="InterPro" id="IPR014724">
    <property type="entry name" value="RNA_pol_RPB2_OB-fold"/>
</dbReference>
<dbReference type="NCBIfam" id="NF001616">
    <property type="entry name" value="PRK00405.1"/>
    <property type="match status" value="1"/>
</dbReference>
<dbReference type="NCBIfam" id="TIGR02013">
    <property type="entry name" value="rpoB"/>
    <property type="match status" value="1"/>
</dbReference>
<dbReference type="PANTHER" id="PTHR20856">
    <property type="entry name" value="DNA-DIRECTED RNA POLYMERASE I SUBUNIT 2"/>
    <property type="match status" value="1"/>
</dbReference>
<dbReference type="Pfam" id="PF04563">
    <property type="entry name" value="RNA_pol_Rpb2_1"/>
    <property type="match status" value="1"/>
</dbReference>
<dbReference type="Pfam" id="PF04561">
    <property type="entry name" value="RNA_pol_Rpb2_2"/>
    <property type="match status" value="2"/>
</dbReference>
<dbReference type="Pfam" id="PF04565">
    <property type="entry name" value="RNA_pol_Rpb2_3"/>
    <property type="match status" value="1"/>
</dbReference>
<dbReference type="Pfam" id="PF10385">
    <property type="entry name" value="RNA_pol_Rpb2_45"/>
    <property type="match status" value="1"/>
</dbReference>
<dbReference type="Pfam" id="PF00562">
    <property type="entry name" value="RNA_pol_Rpb2_6"/>
    <property type="match status" value="1"/>
</dbReference>
<dbReference type="Pfam" id="PF04560">
    <property type="entry name" value="RNA_pol_Rpb2_7"/>
    <property type="match status" value="1"/>
</dbReference>
<dbReference type="SUPFAM" id="SSF64484">
    <property type="entry name" value="beta and beta-prime subunits of DNA dependent RNA-polymerase"/>
    <property type="match status" value="1"/>
</dbReference>
<dbReference type="PROSITE" id="PS01166">
    <property type="entry name" value="RNA_POL_BETA"/>
    <property type="match status" value="1"/>
</dbReference>